<sequence>MQQLPIEKYSELLTKKQQKLTALLAPFNAPELSVFVSPVQNYRMRAEFRVWHDKGDLYHIMFNQQTKQRYRVDCFPIASLLINRMMENLIPLLKEQEILTKKLFQIDYLSTLSNKIIVSLLYHKTLTEEWQAAAQALKVRLEKLDFDVQIVGRATKQKICLERDYADEVLPVNGRNYVYRQIENSFTQPNAAVNCKMLEWAIGCTKNSSGDLLELYCGNGNFSIALAQNFRKVLATEIAKPSVAAAQFNIAENGIDNLQIIRMSAEEFTQAMNGVREFNRLKGIDLKSYECNTIFVDPPRAGLDPDTVKLVQNYDRILYISCNPNTLCNNLTELTKTHRIEKAALFDQFPYTDHMESGVWLIRK</sequence>
<protein>
    <recommendedName>
        <fullName evidence="1">tRNA/tmRNA (uracil-C(5))-methyltransferase</fullName>
        <ecNumber evidence="1">2.1.1.-</ecNumber>
        <ecNumber evidence="1">2.1.1.35</ecNumber>
    </recommendedName>
    <alternativeName>
        <fullName evidence="1">tRNA (uracil(54)-C(5))-methyltransferase</fullName>
    </alternativeName>
    <alternativeName>
        <fullName evidence="1">tRNA(m5U54)-methyltransferase</fullName>
        <shortName evidence="1">RUMT</shortName>
    </alternativeName>
    <alternativeName>
        <fullName evidence="1">tmRNA (uracil(341)-C(5))-methyltransferase</fullName>
    </alternativeName>
</protein>
<feature type="chain" id="PRO_0000161865" description="tRNA/tmRNA (uracil-C(5))-methyltransferase">
    <location>
        <begin position="1"/>
        <end position="364"/>
    </location>
</feature>
<feature type="active site" description="Nucleophile" evidence="1">
    <location>
        <position position="322"/>
    </location>
</feature>
<feature type="active site" description="Proton acceptor" evidence="1">
    <location>
        <position position="356"/>
    </location>
</feature>
<feature type="binding site" evidence="1">
    <location>
        <position position="188"/>
    </location>
    <ligand>
        <name>S-adenosyl-L-methionine</name>
        <dbReference type="ChEBI" id="CHEBI:59789"/>
    </ligand>
</feature>
<feature type="binding site" evidence="1">
    <location>
        <position position="216"/>
    </location>
    <ligand>
        <name>S-adenosyl-L-methionine</name>
        <dbReference type="ChEBI" id="CHEBI:59789"/>
    </ligand>
</feature>
<feature type="binding site" evidence="1">
    <location>
        <position position="221"/>
    </location>
    <ligand>
        <name>S-adenosyl-L-methionine</name>
        <dbReference type="ChEBI" id="CHEBI:59789"/>
    </ligand>
</feature>
<feature type="binding site" evidence="1">
    <location>
        <position position="237"/>
    </location>
    <ligand>
        <name>S-adenosyl-L-methionine</name>
        <dbReference type="ChEBI" id="CHEBI:59789"/>
    </ligand>
</feature>
<feature type="binding site" evidence="1">
    <location>
        <position position="297"/>
    </location>
    <ligand>
        <name>S-adenosyl-L-methionine</name>
        <dbReference type="ChEBI" id="CHEBI:59789"/>
    </ligand>
</feature>
<organism>
    <name type="scientific">Mannheimia succiniciproducens (strain KCTC 0769BP / MBEL55E)</name>
    <dbReference type="NCBI Taxonomy" id="221988"/>
    <lineage>
        <taxon>Bacteria</taxon>
        <taxon>Pseudomonadati</taxon>
        <taxon>Pseudomonadota</taxon>
        <taxon>Gammaproteobacteria</taxon>
        <taxon>Pasteurellales</taxon>
        <taxon>Pasteurellaceae</taxon>
        <taxon>Basfia</taxon>
    </lineage>
</organism>
<name>TRMA_MANSM</name>
<reference key="1">
    <citation type="journal article" date="2004" name="Nat. Biotechnol.">
        <title>The genome sequence of the capnophilic rumen bacterium Mannheimia succiniciproducens.</title>
        <authorList>
            <person name="Hong S.H."/>
            <person name="Kim J.S."/>
            <person name="Lee S.Y."/>
            <person name="In Y.H."/>
            <person name="Choi S.S."/>
            <person name="Rih J.-K."/>
            <person name="Kim C.H."/>
            <person name="Jeong H."/>
            <person name="Hur C.G."/>
            <person name="Kim J.J."/>
        </authorList>
    </citation>
    <scope>NUCLEOTIDE SEQUENCE [LARGE SCALE GENOMIC DNA]</scope>
    <source>
        <strain>KCTC 0769BP / MBEL55E</strain>
    </source>
</reference>
<keyword id="KW-0489">Methyltransferase</keyword>
<keyword id="KW-0949">S-adenosyl-L-methionine</keyword>
<keyword id="KW-0808">Transferase</keyword>
<keyword id="KW-0819">tRNA processing</keyword>
<gene>
    <name evidence="1" type="primary">trmA</name>
    <name type="ordered locus">MS2367</name>
</gene>
<comment type="function">
    <text evidence="1">Dual-specificity methyltransferase that catalyzes the formation of 5-methyluridine at position 54 (m5U54) in all tRNAs, and that of position 341 (m5U341) in tmRNA (transfer-mRNA).</text>
</comment>
<comment type="catalytic activity">
    <reaction evidence="1">
        <text>uridine(54) in tRNA + S-adenosyl-L-methionine = 5-methyluridine(54) in tRNA + S-adenosyl-L-homocysteine + H(+)</text>
        <dbReference type="Rhea" id="RHEA:42712"/>
        <dbReference type="Rhea" id="RHEA-COMP:10167"/>
        <dbReference type="Rhea" id="RHEA-COMP:10193"/>
        <dbReference type="ChEBI" id="CHEBI:15378"/>
        <dbReference type="ChEBI" id="CHEBI:57856"/>
        <dbReference type="ChEBI" id="CHEBI:59789"/>
        <dbReference type="ChEBI" id="CHEBI:65315"/>
        <dbReference type="ChEBI" id="CHEBI:74447"/>
        <dbReference type="EC" id="2.1.1.35"/>
    </reaction>
</comment>
<comment type="catalytic activity">
    <reaction evidence="1">
        <text>uridine(341) in tmRNA + S-adenosyl-L-methionine = 5-methyluridine(341) in tmRNA + S-adenosyl-L-homocysteine + H(+)</text>
        <dbReference type="Rhea" id="RHEA:43612"/>
        <dbReference type="Rhea" id="RHEA-COMP:10630"/>
        <dbReference type="Rhea" id="RHEA-COMP:10631"/>
        <dbReference type="ChEBI" id="CHEBI:15378"/>
        <dbReference type="ChEBI" id="CHEBI:57856"/>
        <dbReference type="ChEBI" id="CHEBI:59789"/>
        <dbReference type="ChEBI" id="CHEBI:65315"/>
        <dbReference type="ChEBI" id="CHEBI:74447"/>
    </reaction>
</comment>
<comment type="similarity">
    <text evidence="1">Belongs to the class I-like SAM-binding methyltransferase superfamily. RNA M5U methyltransferase family. TrmA subfamily.</text>
</comment>
<dbReference type="EC" id="2.1.1.-" evidence="1"/>
<dbReference type="EC" id="2.1.1.35" evidence="1"/>
<dbReference type="EMBL" id="AE016827">
    <property type="protein sequence ID" value="AAU38974.1"/>
    <property type="molecule type" value="Genomic_DNA"/>
</dbReference>
<dbReference type="RefSeq" id="WP_011201512.1">
    <property type="nucleotide sequence ID" value="NC_006300.1"/>
</dbReference>
<dbReference type="SMR" id="Q65PY6"/>
<dbReference type="STRING" id="221988.MS2367"/>
<dbReference type="KEGG" id="msu:MS2367"/>
<dbReference type="eggNOG" id="COG2265">
    <property type="taxonomic scope" value="Bacteria"/>
</dbReference>
<dbReference type="HOGENOM" id="CLU_043022_0_0_6"/>
<dbReference type="OrthoDB" id="9804590at2"/>
<dbReference type="Proteomes" id="UP000000607">
    <property type="component" value="Chromosome"/>
</dbReference>
<dbReference type="GO" id="GO:0005829">
    <property type="term" value="C:cytosol"/>
    <property type="evidence" value="ECO:0007669"/>
    <property type="project" value="TreeGrafter"/>
</dbReference>
<dbReference type="GO" id="GO:0019843">
    <property type="term" value="F:rRNA binding"/>
    <property type="evidence" value="ECO:0007669"/>
    <property type="project" value="TreeGrafter"/>
</dbReference>
<dbReference type="GO" id="GO:0030697">
    <property type="term" value="F:tRNA (uracil(54)-C5)-methyltransferase activity, S-adenosyl methionine-dependent"/>
    <property type="evidence" value="ECO:0007669"/>
    <property type="project" value="UniProtKB-UniRule"/>
</dbReference>
<dbReference type="GO" id="GO:0000049">
    <property type="term" value="F:tRNA binding"/>
    <property type="evidence" value="ECO:0007669"/>
    <property type="project" value="TreeGrafter"/>
</dbReference>
<dbReference type="GO" id="GO:0030488">
    <property type="term" value="P:tRNA methylation"/>
    <property type="evidence" value="ECO:0007669"/>
    <property type="project" value="UniProtKB-UniRule"/>
</dbReference>
<dbReference type="CDD" id="cd02440">
    <property type="entry name" value="AdoMet_MTases"/>
    <property type="match status" value="1"/>
</dbReference>
<dbReference type="FunFam" id="2.40.50.1070:FF:000001">
    <property type="entry name" value="tRNA/tmRNA (uracil-C(5))-methyltransferase"/>
    <property type="match status" value="1"/>
</dbReference>
<dbReference type="FunFam" id="3.40.50.150:FF:000012">
    <property type="entry name" value="tRNA/tmRNA (uracil-C(5))-methyltransferase"/>
    <property type="match status" value="1"/>
</dbReference>
<dbReference type="Gene3D" id="2.40.50.1070">
    <property type="match status" value="1"/>
</dbReference>
<dbReference type="Gene3D" id="3.40.50.150">
    <property type="entry name" value="Vaccinia Virus protein VP39"/>
    <property type="match status" value="1"/>
</dbReference>
<dbReference type="HAMAP" id="MF_01011">
    <property type="entry name" value="RNA_methyltr_TrmA"/>
    <property type="match status" value="1"/>
</dbReference>
<dbReference type="InterPro" id="IPR030390">
    <property type="entry name" value="MeTrfase_TrmA_AS"/>
</dbReference>
<dbReference type="InterPro" id="IPR030391">
    <property type="entry name" value="MeTrfase_TrmA_CS"/>
</dbReference>
<dbReference type="InterPro" id="IPR029063">
    <property type="entry name" value="SAM-dependent_MTases_sf"/>
</dbReference>
<dbReference type="InterPro" id="IPR011869">
    <property type="entry name" value="TrmA_MeTrfase"/>
</dbReference>
<dbReference type="InterPro" id="IPR010280">
    <property type="entry name" value="U5_MeTrfase_fam"/>
</dbReference>
<dbReference type="NCBIfam" id="TIGR02143">
    <property type="entry name" value="trmA_only"/>
    <property type="match status" value="1"/>
</dbReference>
<dbReference type="PANTHER" id="PTHR47790">
    <property type="entry name" value="TRNA/TMRNA (URACIL-C(5))-METHYLTRANSFERASE"/>
    <property type="match status" value="1"/>
</dbReference>
<dbReference type="PANTHER" id="PTHR47790:SF2">
    <property type="entry name" value="TRNA_TMRNA (URACIL-C(5))-METHYLTRANSFERASE"/>
    <property type="match status" value="1"/>
</dbReference>
<dbReference type="Pfam" id="PF05958">
    <property type="entry name" value="tRNA_U5-meth_tr"/>
    <property type="match status" value="1"/>
</dbReference>
<dbReference type="SUPFAM" id="SSF53335">
    <property type="entry name" value="S-adenosyl-L-methionine-dependent methyltransferases"/>
    <property type="match status" value="1"/>
</dbReference>
<dbReference type="PROSITE" id="PS51687">
    <property type="entry name" value="SAM_MT_RNA_M5U"/>
    <property type="match status" value="1"/>
</dbReference>
<dbReference type="PROSITE" id="PS01230">
    <property type="entry name" value="TRMA_1"/>
    <property type="match status" value="1"/>
</dbReference>
<dbReference type="PROSITE" id="PS01231">
    <property type="entry name" value="TRMA_2"/>
    <property type="match status" value="1"/>
</dbReference>
<proteinExistence type="inferred from homology"/>
<accession>Q65PY6</accession>
<evidence type="ECO:0000255" key="1">
    <source>
        <dbReference type="HAMAP-Rule" id="MF_01011"/>
    </source>
</evidence>